<organism>
    <name type="scientific">Staphylococcus aureus (strain MSSA476)</name>
    <dbReference type="NCBI Taxonomy" id="282459"/>
    <lineage>
        <taxon>Bacteria</taxon>
        <taxon>Bacillati</taxon>
        <taxon>Bacillota</taxon>
        <taxon>Bacilli</taxon>
        <taxon>Bacillales</taxon>
        <taxon>Staphylococcaceae</taxon>
        <taxon>Staphylococcus</taxon>
    </lineage>
</organism>
<proteinExistence type="inferred from homology"/>
<feature type="chain" id="PRO_0000083157" description="Monofunctional glycosyltransferase">
    <location>
        <begin position="1"/>
        <end position="269"/>
    </location>
</feature>
<feature type="transmembrane region" description="Helical" evidence="1">
    <location>
        <begin position="46"/>
        <end position="66"/>
    </location>
</feature>
<dbReference type="EC" id="2.4.99.28" evidence="1"/>
<dbReference type="EMBL" id="BX571857">
    <property type="protein sequence ID" value="CAG43601.1"/>
    <property type="molecule type" value="Genomic_DNA"/>
</dbReference>
<dbReference type="SMR" id="Q6G860"/>
<dbReference type="CAZy" id="GT51">
    <property type="family name" value="Glycosyltransferase Family 51"/>
</dbReference>
<dbReference type="KEGG" id="sas:SAS1796"/>
<dbReference type="HOGENOM" id="CLU_006354_1_2_9"/>
<dbReference type="UniPathway" id="UPA00219"/>
<dbReference type="GO" id="GO:0030288">
    <property type="term" value="C:outer membrane-bounded periplasmic space"/>
    <property type="evidence" value="ECO:0007669"/>
    <property type="project" value="TreeGrafter"/>
</dbReference>
<dbReference type="GO" id="GO:0005886">
    <property type="term" value="C:plasma membrane"/>
    <property type="evidence" value="ECO:0007669"/>
    <property type="project" value="UniProtKB-SubCell"/>
</dbReference>
<dbReference type="GO" id="GO:0008955">
    <property type="term" value="F:peptidoglycan glycosyltransferase activity"/>
    <property type="evidence" value="ECO:0007669"/>
    <property type="project" value="UniProtKB-UniRule"/>
</dbReference>
<dbReference type="GO" id="GO:0071555">
    <property type="term" value="P:cell wall organization"/>
    <property type="evidence" value="ECO:0007669"/>
    <property type="project" value="UniProtKB-KW"/>
</dbReference>
<dbReference type="GO" id="GO:0009252">
    <property type="term" value="P:peptidoglycan biosynthetic process"/>
    <property type="evidence" value="ECO:0007669"/>
    <property type="project" value="UniProtKB-UniRule"/>
</dbReference>
<dbReference type="GO" id="GO:0008360">
    <property type="term" value="P:regulation of cell shape"/>
    <property type="evidence" value="ECO:0007669"/>
    <property type="project" value="UniProtKB-KW"/>
</dbReference>
<dbReference type="Gene3D" id="1.10.3810.10">
    <property type="entry name" value="Biosynthetic peptidoglycan transglycosylase-like"/>
    <property type="match status" value="1"/>
</dbReference>
<dbReference type="HAMAP" id="MF_01434">
    <property type="entry name" value="MGT"/>
    <property type="match status" value="1"/>
</dbReference>
<dbReference type="InterPro" id="IPR001264">
    <property type="entry name" value="Glyco_trans_51"/>
</dbReference>
<dbReference type="InterPro" id="IPR050396">
    <property type="entry name" value="Glycosyltr_51/Transpeptidase"/>
</dbReference>
<dbReference type="InterPro" id="IPR023346">
    <property type="entry name" value="Lysozyme-like_dom_sf"/>
</dbReference>
<dbReference type="InterPro" id="IPR022978">
    <property type="entry name" value="Monofunct_glyco_trans"/>
</dbReference>
<dbReference type="InterPro" id="IPR036950">
    <property type="entry name" value="PBP_transglycosylase"/>
</dbReference>
<dbReference type="NCBIfam" id="NF010008">
    <property type="entry name" value="PRK13481.1"/>
    <property type="match status" value="1"/>
</dbReference>
<dbReference type="PANTHER" id="PTHR32282">
    <property type="entry name" value="BINDING PROTEIN TRANSPEPTIDASE, PUTATIVE-RELATED"/>
    <property type="match status" value="1"/>
</dbReference>
<dbReference type="PANTHER" id="PTHR32282:SF11">
    <property type="entry name" value="PENICILLIN-BINDING PROTEIN 1B"/>
    <property type="match status" value="1"/>
</dbReference>
<dbReference type="Pfam" id="PF00912">
    <property type="entry name" value="Transgly"/>
    <property type="match status" value="1"/>
</dbReference>
<dbReference type="SUPFAM" id="SSF53955">
    <property type="entry name" value="Lysozyme-like"/>
    <property type="match status" value="1"/>
</dbReference>
<evidence type="ECO:0000255" key="1">
    <source>
        <dbReference type="HAMAP-Rule" id="MF_01434"/>
    </source>
</evidence>
<reference key="1">
    <citation type="journal article" date="2004" name="Proc. Natl. Acad. Sci. U.S.A.">
        <title>Complete genomes of two clinical Staphylococcus aureus strains: evidence for the rapid evolution of virulence and drug resistance.</title>
        <authorList>
            <person name="Holden M.T.G."/>
            <person name="Feil E.J."/>
            <person name="Lindsay J.A."/>
            <person name="Peacock S.J."/>
            <person name="Day N.P.J."/>
            <person name="Enright M.C."/>
            <person name="Foster T.J."/>
            <person name="Moore C.E."/>
            <person name="Hurst L."/>
            <person name="Atkin R."/>
            <person name="Barron A."/>
            <person name="Bason N."/>
            <person name="Bentley S.D."/>
            <person name="Chillingworth C."/>
            <person name="Chillingworth T."/>
            <person name="Churcher C."/>
            <person name="Clark L."/>
            <person name="Corton C."/>
            <person name="Cronin A."/>
            <person name="Doggett J."/>
            <person name="Dowd L."/>
            <person name="Feltwell T."/>
            <person name="Hance Z."/>
            <person name="Harris B."/>
            <person name="Hauser H."/>
            <person name="Holroyd S."/>
            <person name="Jagels K."/>
            <person name="James K.D."/>
            <person name="Lennard N."/>
            <person name="Line A."/>
            <person name="Mayes R."/>
            <person name="Moule S."/>
            <person name="Mungall K."/>
            <person name="Ormond D."/>
            <person name="Quail M.A."/>
            <person name="Rabbinowitsch E."/>
            <person name="Rutherford K.M."/>
            <person name="Sanders M."/>
            <person name="Sharp S."/>
            <person name="Simmonds M."/>
            <person name="Stevens K."/>
            <person name="Whitehead S."/>
            <person name="Barrell B.G."/>
            <person name="Spratt B.G."/>
            <person name="Parkhill J."/>
        </authorList>
    </citation>
    <scope>NUCLEOTIDE SEQUENCE [LARGE SCALE GENOMIC DNA]</scope>
    <source>
        <strain>MSSA476</strain>
    </source>
</reference>
<sequence length="269" mass="31460">MKRSDRYSNSNEHFEHMKHEPHYNTYYQPVGKPPKKKKSKRILLKILLTILIIIALFIGIMYFLSTRDNVDELRKIENKSSFVSADNMPEYVKGAFISMEDERFYNHHGFDLKGTTRALFSTISDRDVQGGSTITQQVVKNYFYDNDRSFTRKVKELFVAHRVEKQYNKNEILSFYLNNIYFGDNQYTLEGAANHYFGTTVNKNSTTMSHITVLQSAILASKVNAPSVYNINNMSENFTQRVSTNLEKMKQQNYINETQYQQAMSQLNR</sequence>
<accession>Q6G860</accession>
<gene>
    <name evidence="1" type="primary">mgt</name>
    <name type="ordered locus">SAS1796</name>
</gene>
<name>MGT_STAAS</name>
<comment type="function">
    <text evidence="1">Peptidoglycan polymerase that catalyzes glycan chain elongation using lipid-linked disaccharide-pentapeptide as the substrate.</text>
</comment>
<comment type="catalytic activity">
    <reaction evidence="1">
        <text>[GlcNAc-(1-&gt;4)-Mur2Ac(oyl-L-Ala-gamma-D-Glu-L-Lys-D-Ala-D-Ala)](n)-di-trans,octa-cis-undecaprenyl diphosphate + beta-D-GlcNAc-(1-&gt;4)-Mur2Ac(oyl-L-Ala-gamma-D-Glu-L-Lys-D-Ala-D-Ala)-di-trans,octa-cis-undecaprenyl diphosphate = [GlcNAc-(1-&gt;4)-Mur2Ac(oyl-L-Ala-gamma-D-Glu-L-Lys-D-Ala-D-Ala)](n+1)-di-trans,octa-cis-undecaprenyl diphosphate + di-trans,octa-cis-undecaprenyl diphosphate + H(+)</text>
        <dbReference type="Rhea" id="RHEA:23708"/>
        <dbReference type="Rhea" id="RHEA-COMP:9602"/>
        <dbReference type="Rhea" id="RHEA-COMP:9603"/>
        <dbReference type="ChEBI" id="CHEBI:15378"/>
        <dbReference type="ChEBI" id="CHEBI:58405"/>
        <dbReference type="ChEBI" id="CHEBI:60033"/>
        <dbReference type="ChEBI" id="CHEBI:78435"/>
        <dbReference type="EC" id="2.4.99.28"/>
    </reaction>
</comment>
<comment type="pathway">
    <text evidence="1">Cell wall biogenesis; peptidoglycan biosynthesis.</text>
</comment>
<comment type="subcellular location">
    <subcellularLocation>
        <location evidence="1">Cell membrane</location>
        <topology evidence="1">Single-pass membrane protein</topology>
    </subcellularLocation>
</comment>
<comment type="similarity">
    <text evidence="1">Belongs to the glycosyltransferase 51 family.</text>
</comment>
<keyword id="KW-1003">Cell membrane</keyword>
<keyword id="KW-0133">Cell shape</keyword>
<keyword id="KW-0961">Cell wall biogenesis/degradation</keyword>
<keyword id="KW-0328">Glycosyltransferase</keyword>
<keyword id="KW-0472">Membrane</keyword>
<keyword id="KW-0573">Peptidoglycan synthesis</keyword>
<keyword id="KW-0808">Transferase</keyword>
<keyword id="KW-0812">Transmembrane</keyword>
<keyword id="KW-1133">Transmembrane helix</keyword>
<protein>
    <recommendedName>
        <fullName evidence="1">Monofunctional glycosyltransferase</fullName>
        <shortName evidence="1">MGT</shortName>
        <ecNumber evidence="1">2.4.99.28</ecNumber>
    </recommendedName>
    <alternativeName>
        <fullName evidence="1">Peptidoglycan TGase</fullName>
    </alternativeName>
</protein>